<gene>
    <name evidence="5" type="primary">ptmL</name>
</gene>
<feature type="chain" id="PRO_0000446583" description="Cytochrome P450 monooxygenase ptmG">
    <location>
        <begin position="1"/>
        <end position="540"/>
    </location>
</feature>
<feature type="transmembrane region" description="Helical" evidence="2">
    <location>
        <begin position="20"/>
        <end position="40"/>
    </location>
</feature>
<feature type="transmembrane region" description="Helical" evidence="2">
    <location>
        <begin position="325"/>
        <end position="345"/>
    </location>
</feature>
<feature type="binding site" description="axial binding residue" evidence="1">
    <location>
        <position position="474"/>
    </location>
    <ligand>
        <name>heme</name>
        <dbReference type="ChEBI" id="CHEBI:30413"/>
    </ligand>
    <ligandPart>
        <name>Fe</name>
        <dbReference type="ChEBI" id="CHEBI:18248"/>
    </ligandPart>
</feature>
<feature type="glycosylation site" description="N-linked (GlcNAc...) asparagine" evidence="3">
    <location>
        <position position="17"/>
    </location>
</feature>
<accession>A0A140JWU1</accession>
<dbReference type="EC" id="1.-.-.-" evidence="4"/>
<dbReference type="EMBL" id="LC027937">
    <property type="protein sequence ID" value="BAU61568.1"/>
    <property type="molecule type" value="Genomic_DNA"/>
</dbReference>
<dbReference type="SMR" id="A0A140JWU1"/>
<dbReference type="GlyCosmos" id="A0A140JWU1">
    <property type="glycosylation" value="1 site, No reported glycans"/>
</dbReference>
<dbReference type="GO" id="GO:0016020">
    <property type="term" value="C:membrane"/>
    <property type="evidence" value="ECO:0007669"/>
    <property type="project" value="UniProtKB-SubCell"/>
</dbReference>
<dbReference type="GO" id="GO:0020037">
    <property type="term" value="F:heme binding"/>
    <property type="evidence" value="ECO:0007669"/>
    <property type="project" value="InterPro"/>
</dbReference>
<dbReference type="GO" id="GO:0005506">
    <property type="term" value="F:iron ion binding"/>
    <property type="evidence" value="ECO:0007669"/>
    <property type="project" value="InterPro"/>
</dbReference>
<dbReference type="GO" id="GO:0004497">
    <property type="term" value="F:monooxygenase activity"/>
    <property type="evidence" value="ECO:0007669"/>
    <property type="project" value="UniProtKB-KW"/>
</dbReference>
<dbReference type="GO" id="GO:0016705">
    <property type="term" value="F:oxidoreductase activity, acting on paired donors, with incorporation or reduction of molecular oxygen"/>
    <property type="evidence" value="ECO:0007669"/>
    <property type="project" value="InterPro"/>
</dbReference>
<dbReference type="GO" id="GO:0043386">
    <property type="term" value="P:mycotoxin biosynthetic process"/>
    <property type="evidence" value="ECO:0007669"/>
    <property type="project" value="UniProtKB-ARBA"/>
</dbReference>
<dbReference type="Gene3D" id="1.10.630.10">
    <property type="entry name" value="Cytochrome P450"/>
    <property type="match status" value="1"/>
</dbReference>
<dbReference type="InterPro" id="IPR001128">
    <property type="entry name" value="Cyt_P450"/>
</dbReference>
<dbReference type="InterPro" id="IPR002401">
    <property type="entry name" value="Cyt_P450_E_grp-I"/>
</dbReference>
<dbReference type="InterPro" id="IPR036396">
    <property type="entry name" value="Cyt_P450_sf"/>
</dbReference>
<dbReference type="InterPro" id="IPR050121">
    <property type="entry name" value="Cytochrome_P450_monoxygenase"/>
</dbReference>
<dbReference type="PANTHER" id="PTHR24305">
    <property type="entry name" value="CYTOCHROME P450"/>
    <property type="match status" value="1"/>
</dbReference>
<dbReference type="PANTHER" id="PTHR24305:SF107">
    <property type="entry name" value="P450, PUTATIVE (EUROFUNG)-RELATED"/>
    <property type="match status" value="1"/>
</dbReference>
<dbReference type="Pfam" id="PF00067">
    <property type="entry name" value="p450"/>
    <property type="match status" value="1"/>
</dbReference>
<dbReference type="PRINTS" id="PR00463">
    <property type="entry name" value="EP450I"/>
</dbReference>
<dbReference type="PRINTS" id="PR00385">
    <property type="entry name" value="P450"/>
</dbReference>
<dbReference type="SUPFAM" id="SSF48264">
    <property type="entry name" value="Cytochrome P450"/>
    <property type="match status" value="1"/>
</dbReference>
<name>PTML_PENOH</name>
<sequence length="540" mass="61327">MAIPKTMEAPFTHLFLNLTVMTLGQILVIPVALLVVYICIRIGSIRRQFRDLPKPPHHAFLGHFPILLRELRTLPRDIFAPLVVDLVRRKFDLPAVFFLDLYPLFNPIVFISDPGLARKITQEDRSLRYPGVFETLYPAIPTRWFRTVADRAWTKWHPVVGVSFTAAHFVRMVPQMAEDLRAMLDQLNDWSDRDEIFCMERVATDAILAMTGRAYFGMELDCFAPKSQWTSAFRAATTPVVAARNPLRKPFVLPSWKRHARTFHAVIREKVQHTFDKDENHEAGVPSLLASSFAVYRKNGFPEFPRVSQEALSTEYLEELTSTGAAFLIGATSGASVISYAFLLLHQHPNILDDLRREHGQVCGFNRQSILLALQSRPRLLNDLKLTHAVLKETLRLFPMGPVLRKCPSETMEYEGRTYDIRNHIVAISHNSLHRRPDLFPNPDAFNPYRFLPGAAIPIPADAWRPFEKGNGYCVGQELAMIQMKVMLLLTLTEFDFQPKYAREAARGPDIYGGYAYTTGSGIGPTPAGGLPMRVDKRMK</sequence>
<keyword id="KW-0325">Glycoprotein</keyword>
<keyword id="KW-0349">Heme</keyword>
<keyword id="KW-0408">Iron</keyword>
<keyword id="KW-0472">Membrane</keyword>
<keyword id="KW-0479">Metal-binding</keyword>
<keyword id="KW-0503">Monooxygenase</keyword>
<keyword id="KW-0560">Oxidoreductase</keyword>
<keyword id="KW-0812">Transmembrane</keyword>
<keyword id="KW-1133">Transmembrane helix</keyword>
<organism>
    <name type="scientific">Penicillium ochrochloron</name>
    <dbReference type="NCBI Taxonomy" id="69780"/>
    <lineage>
        <taxon>Eukaryota</taxon>
        <taxon>Fungi</taxon>
        <taxon>Dikarya</taxon>
        <taxon>Ascomycota</taxon>
        <taxon>Pezizomycotina</taxon>
        <taxon>Eurotiomycetes</taxon>
        <taxon>Eurotiomycetidae</taxon>
        <taxon>Eurotiales</taxon>
        <taxon>Aspergillaceae</taxon>
        <taxon>Penicillium</taxon>
    </lineage>
</organism>
<comment type="function">
    <text evidence="4">Cytochrome P450 monooxygenase; part of the gene cluster that mediates the biosynthesis of the indole diterpenes penitrems (PubMed:25831977). The geranylgeranyl diphosphate (GGPP) synthase ptmG catalyzes the first step in penitrem biosynthesis via conversion of farnesyl pyrophosphate and isopentyl pyrophosphate into geranylgeranyl pyrophosphate (GGPP) (PubMed:25831977). Condensation of indole-3-glycerol phosphate with GGPP by the prenyl transferase ptmC then forms 3-geranylgeranylindole (3-GGI) (PubMed:25831977). Epoxidation by the FAD-dependent monooxygenase ptmM leads to a epoxidized-GGI that is substrate of the terpene cyclase ptmB for cyclization to yield paspaline (PubMed:25831977). Paspaline is subsequently converted to 13-desoxypaxilline by the cytochrome P450 monooxygenase ptmP, the latter being then converted to paxilline by the cytochrome P450 monooxygenase ptmQ (PubMed:25831977). Paxilline is converted to beta-paxitriol via C-10 ketoreduction by the short-chain dehydrogenase ptmH which can be monoprenylated at the C-20 by the indole diterpene prenyltransferase ptmD (PubMed:25831977). A two-step elimination (acetylation and elimination) process performed by the O-acetyltransferase ptmV and ptmI leads to the production of the prenylated form of penijanthine (PubMed:25831977). The FAD-linked oxidoreductase ptmO then converts the prenylated form of penijanthine into PC-M5 which is in turn transformed into PC-M4 by the aromatic dimethylallyltransferase ptmE (PubMed:25831977). Five sequential oxidative transformations performed by the cytochrome P450 monooxygenases ptmK, ptmU, ptmL, ptmN and ptmJ yield the various penitrem compounds. PtmK, ptmU and ptmM are involved in the formation of the key bicyclic ring of penitrem C via the formation of the intermediates secopenitrem D and penitrem D. PtmL catalyzes the epoxidation of penitrem D and C to yield penitrem B and F, respectively. PtmJ catalyzes the last benzylic hydroxylation to convert penitrem B to prenitrem E and penitrem F to penitrem A (PubMed:25831977).</text>
</comment>
<comment type="cofactor">
    <cofactor evidence="1">
        <name>heme</name>
        <dbReference type="ChEBI" id="CHEBI:30413"/>
    </cofactor>
</comment>
<comment type="pathway">
    <text evidence="4">Secondary metabolite biosynthesis.</text>
</comment>
<comment type="subcellular location">
    <subcellularLocation>
        <location evidence="2">Membrane</location>
        <topology evidence="2">Multi-pass membrane protein</topology>
    </subcellularLocation>
</comment>
<comment type="similarity">
    <text evidence="6">Belongs to the cytochrome P450 family.</text>
</comment>
<proteinExistence type="inferred from homology"/>
<reference key="1">
    <citation type="journal article" date="2015" name="Angew. Chem. Int. Ed.">
        <title>Reconstitution of biosynthetic machinery for the synthesis of the highly elaborated indole diterpene penitrem.</title>
        <authorList>
            <person name="Liu C."/>
            <person name="Tagami K."/>
            <person name="Minami A."/>
            <person name="Matsumoto T."/>
            <person name="Frisvad J.C."/>
            <person name="Suzuki H."/>
            <person name="Ishikawa J."/>
            <person name="Gomi K."/>
            <person name="Oikawa H."/>
        </authorList>
    </citation>
    <scope>NUCLEOTIDE SEQUENCE [GENOMIC DNA]</scope>
    <scope>IDENTIFICATION</scope>
    <scope>FUNCTION</scope>
    <scope>PATHWAY</scope>
    <source>
        <strain>ATCC 90288 / AK-40</strain>
    </source>
</reference>
<protein>
    <recommendedName>
        <fullName evidence="5">Cytochrome P450 monooxygenase ptmG</fullName>
        <ecNumber evidence="4">1.-.-.-</ecNumber>
    </recommendedName>
    <alternativeName>
        <fullName evidence="5">Penitrem biosynthesis cluster 2 protein L</fullName>
    </alternativeName>
</protein>
<evidence type="ECO:0000250" key="1">
    <source>
        <dbReference type="UniProtKB" id="P04798"/>
    </source>
</evidence>
<evidence type="ECO:0000255" key="2"/>
<evidence type="ECO:0000255" key="3">
    <source>
        <dbReference type="PROSITE-ProRule" id="PRU00498"/>
    </source>
</evidence>
<evidence type="ECO:0000269" key="4">
    <source>
    </source>
</evidence>
<evidence type="ECO:0000303" key="5">
    <source>
    </source>
</evidence>
<evidence type="ECO:0000305" key="6"/>